<gene>
    <name type="primary">CHI3L1</name>
</gene>
<feature type="chain" id="PRO_0000077055" description="Chitinase-3-like protein 1">
    <location>
        <begin position="1"/>
        <end position="361"/>
    </location>
</feature>
<feature type="domain" description="GH18" evidence="3">
    <location>
        <begin position="1"/>
        <end position="361"/>
    </location>
</feature>
<feature type="region of interest" description="Important for AKT1 activation and IL8 production" evidence="1">
    <location>
        <begin position="302"/>
        <end position="316"/>
    </location>
</feature>
<feature type="binding site" evidence="3">
    <location>
        <begin position="49"/>
        <end position="50"/>
    </location>
    <ligand>
        <name>chitin</name>
        <dbReference type="ChEBI" id="CHEBI:17029"/>
    </ligand>
</feature>
<feature type="binding site" evidence="3">
    <location>
        <begin position="76"/>
        <end position="79"/>
    </location>
    <ligand>
        <name>chitin</name>
        <dbReference type="ChEBI" id="CHEBI:17029"/>
    </ligand>
</feature>
<feature type="binding site" evidence="3">
    <location>
        <position position="120"/>
    </location>
    <ligand>
        <name>chitin</name>
        <dbReference type="ChEBI" id="CHEBI:17029"/>
    </ligand>
</feature>
<feature type="binding site" evidence="3">
    <location>
        <begin position="183"/>
        <end position="186"/>
    </location>
    <ligand>
        <name>chitin</name>
        <dbReference type="ChEBI" id="CHEBI:17029"/>
    </ligand>
</feature>
<feature type="binding site">
    <location>
        <position position="241"/>
    </location>
    <ligand>
        <name>chitin</name>
        <dbReference type="ChEBI" id="CHEBI:17029"/>
    </ligand>
</feature>
<feature type="binding site" evidence="3">
    <location>
        <position position="330"/>
    </location>
    <ligand>
        <name>chitin</name>
        <dbReference type="ChEBI" id="CHEBI:17029"/>
    </ligand>
</feature>
<feature type="glycosylation site" description="N-linked (GlcNAc...) asparagine" evidence="4 5">
    <location>
        <position position="39"/>
    </location>
</feature>
<feature type="glycosylation site" description="N-linked (GlcNAc...) asparagine" evidence="2">
    <location>
        <position position="345"/>
    </location>
</feature>
<feature type="disulfide bond" evidence="3">
    <location>
        <begin position="5"/>
        <end position="30"/>
    </location>
</feature>
<feature type="disulfide bond">
    <location>
        <begin position="278"/>
        <end position="342"/>
    </location>
</feature>
<feature type="strand" evidence="10">
    <location>
        <begin position="2"/>
        <end position="8"/>
    </location>
</feature>
<feature type="helix" evidence="10">
    <location>
        <begin position="9"/>
        <end position="13"/>
    </location>
</feature>
<feature type="helix" evidence="10">
    <location>
        <begin position="16"/>
        <end position="18"/>
    </location>
</feature>
<feature type="helix" evidence="10">
    <location>
        <begin position="22"/>
        <end position="24"/>
    </location>
</feature>
<feature type="turn" evidence="10">
    <location>
        <begin position="27"/>
        <end position="29"/>
    </location>
</feature>
<feature type="strand" evidence="10">
    <location>
        <begin position="31"/>
        <end position="41"/>
    </location>
</feature>
<feature type="strand" evidence="10">
    <location>
        <begin position="44"/>
        <end position="46"/>
    </location>
</feature>
<feature type="helix" evidence="10">
    <location>
        <begin position="52"/>
        <end position="65"/>
    </location>
</feature>
<feature type="strand" evidence="10">
    <location>
        <begin position="70"/>
        <end position="76"/>
    </location>
</feature>
<feature type="turn" evidence="10">
    <location>
        <begin position="77"/>
        <end position="79"/>
    </location>
</feature>
<feature type="helix" evidence="10">
    <location>
        <begin position="82"/>
        <end position="89"/>
    </location>
</feature>
<feature type="helix" evidence="10">
    <location>
        <begin position="92"/>
        <end position="109"/>
    </location>
</feature>
<feature type="strand" evidence="10">
    <location>
        <begin position="112"/>
        <end position="117"/>
    </location>
</feature>
<feature type="helix" evidence="10">
    <location>
        <begin position="123"/>
        <end position="125"/>
    </location>
</feature>
<feature type="helix" evidence="10">
    <location>
        <begin position="126"/>
        <end position="144"/>
    </location>
</feature>
<feature type="turn" evidence="7">
    <location>
        <begin position="145"/>
        <end position="147"/>
    </location>
</feature>
<feature type="strand" evidence="10">
    <location>
        <begin position="152"/>
        <end position="157"/>
    </location>
</feature>
<feature type="helix" evidence="10">
    <location>
        <begin position="161"/>
        <end position="167"/>
    </location>
</feature>
<feature type="helix" evidence="10">
    <location>
        <begin position="170"/>
        <end position="176"/>
    </location>
</feature>
<feature type="strand" evidence="10">
    <location>
        <begin position="178"/>
        <end position="182"/>
    </location>
</feature>
<feature type="strand" evidence="9">
    <location>
        <begin position="192"/>
        <end position="194"/>
    </location>
</feature>
<feature type="strand" evidence="10">
    <location>
        <begin position="205"/>
        <end position="207"/>
    </location>
</feature>
<feature type="strand" evidence="8">
    <location>
        <begin position="211"/>
        <end position="214"/>
    </location>
</feature>
<feature type="helix" evidence="10">
    <location>
        <begin position="215"/>
        <end position="224"/>
    </location>
</feature>
<feature type="helix" evidence="10">
    <location>
        <begin position="229"/>
        <end position="231"/>
    </location>
</feature>
<feature type="strand" evidence="10">
    <location>
        <begin position="232"/>
        <end position="248"/>
    </location>
</feature>
<feature type="strand" evidence="10">
    <location>
        <begin position="255"/>
        <end position="259"/>
    </location>
</feature>
<feature type="turn" evidence="10">
    <location>
        <begin position="264"/>
        <end position="266"/>
    </location>
</feature>
<feature type="strand" evidence="10">
    <location>
        <begin position="271"/>
        <end position="273"/>
    </location>
</feature>
<feature type="helix" evidence="10">
    <location>
        <begin position="274"/>
        <end position="280"/>
    </location>
</feature>
<feature type="turn" evidence="10">
    <location>
        <begin position="281"/>
        <end position="283"/>
    </location>
</feature>
<feature type="strand" evidence="10">
    <location>
        <begin position="285"/>
        <end position="289"/>
    </location>
</feature>
<feature type="turn" evidence="10">
    <location>
        <begin position="290"/>
        <end position="293"/>
    </location>
</feature>
<feature type="strand" evidence="10">
    <location>
        <begin position="294"/>
        <end position="299"/>
    </location>
</feature>
<feature type="strand" evidence="10">
    <location>
        <begin position="302"/>
        <end position="305"/>
    </location>
</feature>
<feature type="helix" evidence="10">
    <location>
        <begin position="309"/>
        <end position="321"/>
    </location>
</feature>
<feature type="strand" evidence="10">
    <location>
        <begin position="325"/>
        <end position="330"/>
    </location>
</feature>
<feature type="helix" evidence="10">
    <location>
        <begin position="332"/>
        <end position="334"/>
    </location>
</feature>
<feature type="strand" evidence="10">
    <location>
        <begin position="337"/>
        <end position="339"/>
    </location>
</feature>
<feature type="strand" evidence="10">
    <location>
        <begin position="341"/>
        <end position="344"/>
    </location>
</feature>
<feature type="helix" evidence="10">
    <location>
        <begin position="349"/>
        <end position="359"/>
    </location>
</feature>
<name>CH3L1_SHEEP</name>
<evidence type="ECO:0000250" key="1"/>
<evidence type="ECO:0000255" key="2"/>
<evidence type="ECO:0000255" key="3">
    <source>
        <dbReference type="PROSITE-ProRule" id="PRU01258"/>
    </source>
</evidence>
<evidence type="ECO:0000269" key="4">
    <source>
    </source>
</evidence>
<evidence type="ECO:0000269" key="5">
    <source>
    </source>
</evidence>
<evidence type="ECO:0000305" key="6"/>
<evidence type="ECO:0007829" key="7">
    <source>
        <dbReference type="PDB" id="1SR0"/>
    </source>
</evidence>
<evidence type="ECO:0007829" key="8">
    <source>
        <dbReference type="PDB" id="2FDM"/>
    </source>
</evidence>
<evidence type="ECO:0007829" key="9">
    <source>
        <dbReference type="PDB" id="2G8Z"/>
    </source>
</evidence>
<evidence type="ECO:0007829" key="10">
    <source>
        <dbReference type="PDB" id="2PI6"/>
    </source>
</evidence>
<proteinExistence type="evidence at protein level"/>
<accession>Q6TMG6</accession>
<comment type="function">
    <text evidence="1">Carbohydrate-binding lectin with a preference for chitin. Has no chitinase activity. May play a role in tissue remodeling and in the capacity of cells to respond to and cope with changes in their environment. Plays a role in T-helper cell type 2 (Th2) inflammatory response and IL-13-induced inflammation, regulating allergen sensitization, inflammatory cell apoptosis, dendritic cell accumulation and M2 macrophage differentiation. Facilitates invasion of pathogenic enteric bacteria into colonic mucosa and lymphoid organs. Mediates activation of AKT1 signaling pathway and subsequent IL8 production in colonic epithelial cells. Regulates antibacterial responses in lung by contributing to macrophage bacterial killing, controlling bacterial dissemination and augmenting host tolerance. Also regulates hyperoxia-induced injury, inflammation and epithelial apoptosis in lung (By similarity).</text>
</comment>
<comment type="subunit">
    <text>Monomer.</text>
</comment>
<comment type="subcellular location">
    <subcellularLocation>
        <location evidence="5">Secreted</location>
        <location evidence="5">Extracellular space</location>
    </subcellularLocation>
    <subcellularLocation>
        <location evidence="1">Cytoplasm</location>
    </subcellularLocation>
    <subcellularLocation>
        <location evidence="1">Cytoplasm</location>
        <location evidence="1">Perinuclear region</location>
    </subcellularLocation>
    <subcellularLocation>
        <location evidence="1">Endoplasmic reticulum</location>
    </subcellularLocation>
</comment>
<comment type="tissue specificity">
    <text>Detected in mammary gland.</text>
</comment>
<comment type="similarity">
    <text evidence="6">Belongs to the glycosyl hydrolase 18 family.</text>
</comment>
<comment type="caution">
    <text evidence="6">Although it belongs to the glycosyl hydrolase 18 family, Leu-119 is present instead of the conserved Glu which is an active site residue. Therefore this protein lacks chitinase activity.</text>
</comment>
<dbReference type="EMBL" id="AY392761">
    <property type="protein sequence ID" value="AAQ94054.1"/>
    <property type="molecule type" value="mRNA"/>
</dbReference>
<dbReference type="PDB" id="1SR0">
    <property type="method" value="X-ray"/>
    <property type="resolution" value="3.05 A"/>
    <property type="chains" value="A=1-361"/>
</dbReference>
<dbReference type="PDB" id="1ZBK">
    <property type="method" value="X-ray"/>
    <property type="resolution" value="2.90 A"/>
    <property type="chains" value="A=1-360"/>
</dbReference>
<dbReference type="PDB" id="1ZL1">
    <property type="method" value="X-ray"/>
    <property type="resolution" value="3.50 A"/>
    <property type="chains" value="A=1-360"/>
</dbReference>
<dbReference type="PDB" id="2DPE">
    <property type="method" value="X-ray"/>
    <property type="resolution" value="2.07 A"/>
    <property type="chains" value="A=1-361"/>
</dbReference>
<dbReference type="PDB" id="2DSU">
    <property type="method" value="X-ray"/>
    <property type="resolution" value="2.20 A"/>
    <property type="chains" value="A=1-361"/>
</dbReference>
<dbReference type="PDB" id="2DSV">
    <property type="method" value="X-ray"/>
    <property type="resolution" value="2.54 A"/>
    <property type="chains" value="A=1-361"/>
</dbReference>
<dbReference type="PDB" id="2DSW">
    <property type="method" value="X-ray"/>
    <property type="resolution" value="2.80 A"/>
    <property type="chains" value="A=1-361"/>
</dbReference>
<dbReference type="PDB" id="2FDM">
    <property type="method" value="X-ray"/>
    <property type="resolution" value="3.00 A"/>
    <property type="chains" value="A=1-360"/>
</dbReference>
<dbReference type="PDB" id="2G41">
    <property type="method" value="X-ray"/>
    <property type="resolution" value="3.00 A"/>
    <property type="chains" value="A=1-361"/>
</dbReference>
<dbReference type="PDB" id="2G8Z">
    <property type="method" value="X-ray"/>
    <property type="resolution" value="2.50 A"/>
    <property type="chains" value="A=1-361"/>
</dbReference>
<dbReference type="PDB" id="2PI6">
    <property type="method" value="X-ray"/>
    <property type="resolution" value="1.65 A"/>
    <property type="chains" value="A=1-361"/>
</dbReference>
<dbReference type="PDB" id="5Z4V">
    <property type="method" value="X-ray"/>
    <property type="resolution" value="1.65 A"/>
    <property type="chains" value="A=1-361"/>
</dbReference>
<dbReference type="PDBsum" id="1SR0"/>
<dbReference type="PDBsum" id="1ZBK"/>
<dbReference type="PDBsum" id="1ZL1"/>
<dbReference type="PDBsum" id="2DPE"/>
<dbReference type="PDBsum" id="2DSU"/>
<dbReference type="PDBsum" id="2DSV"/>
<dbReference type="PDBsum" id="2DSW"/>
<dbReference type="PDBsum" id="2FDM"/>
<dbReference type="PDBsum" id="2G41"/>
<dbReference type="PDBsum" id="2G8Z"/>
<dbReference type="PDBsum" id="2PI6"/>
<dbReference type="PDBsum" id="5Z4V"/>
<dbReference type="SMR" id="Q6TMG6"/>
<dbReference type="STRING" id="9940.ENSOARP00000001430"/>
<dbReference type="CAZy" id="GH18">
    <property type="family name" value="Glycoside Hydrolase Family 18"/>
</dbReference>
<dbReference type="GlyCosmos" id="Q6TMG6">
    <property type="glycosylation" value="2 sites, No reported glycans"/>
</dbReference>
<dbReference type="iPTMnet" id="Q6TMG6"/>
<dbReference type="PaxDb" id="9940-ENSOARP00000001430"/>
<dbReference type="eggNOG" id="KOG2806">
    <property type="taxonomic scope" value="Eukaryota"/>
</dbReference>
<dbReference type="EvolutionaryTrace" id="Q6TMG6"/>
<dbReference type="Proteomes" id="UP000002356">
    <property type="component" value="Unplaced"/>
</dbReference>
<dbReference type="GO" id="GO:0005737">
    <property type="term" value="C:cytoplasm"/>
    <property type="evidence" value="ECO:0000250"/>
    <property type="project" value="UniProtKB"/>
</dbReference>
<dbReference type="GO" id="GO:0005783">
    <property type="term" value="C:endoplasmic reticulum"/>
    <property type="evidence" value="ECO:0000250"/>
    <property type="project" value="UniProtKB"/>
</dbReference>
<dbReference type="GO" id="GO:0005615">
    <property type="term" value="C:extracellular space"/>
    <property type="evidence" value="ECO:0000250"/>
    <property type="project" value="UniProtKB"/>
</dbReference>
<dbReference type="GO" id="GO:0048471">
    <property type="term" value="C:perinuclear region of cytoplasm"/>
    <property type="evidence" value="ECO:0007669"/>
    <property type="project" value="UniProtKB-SubCell"/>
</dbReference>
<dbReference type="GO" id="GO:0030246">
    <property type="term" value="F:carbohydrate binding"/>
    <property type="evidence" value="ECO:0007669"/>
    <property type="project" value="UniProtKB-KW"/>
</dbReference>
<dbReference type="GO" id="GO:0008061">
    <property type="term" value="F:chitin binding"/>
    <property type="evidence" value="ECO:0000250"/>
    <property type="project" value="UniProtKB"/>
</dbReference>
<dbReference type="GO" id="GO:0007250">
    <property type="term" value="P:activation of NF-kappaB-inducing kinase activity"/>
    <property type="evidence" value="ECO:0000250"/>
    <property type="project" value="UniProtKB"/>
</dbReference>
<dbReference type="GO" id="GO:0006915">
    <property type="term" value="P:apoptotic process"/>
    <property type="evidence" value="ECO:0007669"/>
    <property type="project" value="UniProtKB-KW"/>
</dbReference>
<dbReference type="GO" id="GO:0005975">
    <property type="term" value="P:carbohydrate metabolic process"/>
    <property type="evidence" value="ECO:0007669"/>
    <property type="project" value="InterPro"/>
</dbReference>
<dbReference type="GO" id="GO:0071356">
    <property type="term" value="P:cellular response to tumor necrosis factor"/>
    <property type="evidence" value="ECO:0000250"/>
    <property type="project" value="UniProtKB"/>
</dbReference>
<dbReference type="GO" id="GO:0006032">
    <property type="term" value="P:chitin catabolic process"/>
    <property type="evidence" value="ECO:0007669"/>
    <property type="project" value="TreeGrafter"/>
</dbReference>
<dbReference type="GO" id="GO:0006954">
    <property type="term" value="P:inflammatory response"/>
    <property type="evidence" value="ECO:0000250"/>
    <property type="project" value="UniProtKB"/>
</dbReference>
<dbReference type="GO" id="GO:0030324">
    <property type="term" value="P:lung development"/>
    <property type="evidence" value="ECO:0000250"/>
    <property type="project" value="UniProtKB"/>
</dbReference>
<dbReference type="GO" id="GO:0045766">
    <property type="term" value="P:positive regulation of angiogenesis"/>
    <property type="evidence" value="ECO:0000250"/>
    <property type="project" value="UniProtKB"/>
</dbReference>
<dbReference type="GO" id="GO:0070374">
    <property type="term" value="P:positive regulation of ERK1 and ERK2 cascade"/>
    <property type="evidence" value="ECO:0000250"/>
    <property type="project" value="UniProtKB"/>
</dbReference>
<dbReference type="GO" id="GO:0032757">
    <property type="term" value="P:positive regulation of interleukin-8 production"/>
    <property type="evidence" value="ECO:0000250"/>
    <property type="project" value="UniProtKB"/>
</dbReference>
<dbReference type="GO" id="GO:0010800">
    <property type="term" value="P:positive regulation of peptidyl-threonine phosphorylation"/>
    <property type="evidence" value="ECO:0000250"/>
    <property type="project" value="UniProtKB"/>
</dbReference>
<dbReference type="GO" id="GO:0051897">
    <property type="term" value="P:positive regulation of phosphatidylinositol 3-kinase/protein kinase B signal transduction"/>
    <property type="evidence" value="ECO:0000250"/>
    <property type="project" value="UniProtKB"/>
</dbReference>
<dbReference type="GO" id="GO:0070555">
    <property type="term" value="P:response to interleukin-1"/>
    <property type="evidence" value="ECO:0000250"/>
    <property type="project" value="UniProtKB"/>
</dbReference>
<dbReference type="GO" id="GO:0070741">
    <property type="term" value="P:response to interleukin-6"/>
    <property type="evidence" value="ECO:0000250"/>
    <property type="project" value="UniProtKB"/>
</dbReference>
<dbReference type="GO" id="GO:0009612">
    <property type="term" value="P:response to mechanical stimulus"/>
    <property type="evidence" value="ECO:0000250"/>
    <property type="project" value="UniProtKB"/>
</dbReference>
<dbReference type="GO" id="GO:0034612">
    <property type="term" value="P:response to tumor necrosis factor"/>
    <property type="evidence" value="ECO:0000250"/>
    <property type="project" value="UniProtKB"/>
</dbReference>
<dbReference type="CDD" id="cd02872">
    <property type="entry name" value="GH18_chitolectin_chitotriosidase"/>
    <property type="match status" value="1"/>
</dbReference>
<dbReference type="FunFam" id="3.10.50.10:FF:000001">
    <property type="entry name" value="Chitinase 3-like 1"/>
    <property type="match status" value="1"/>
</dbReference>
<dbReference type="FunFam" id="3.20.20.80:FF:000047">
    <property type="entry name" value="Chitinase-3-like protein 1"/>
    <property type="match status" value="1"/>
</dbReference>
<dbReference type="Gene3D" id="3.10.50.10">
    <property type="match status" value="1"/>
</dbReference>
<dbReference type="Gene3D" id="3.20.20.80">
    <property type="entry name" value="Glycosidases"/>
    <property type="match status" value="1"/>
</dbReference>
<dbReference type="InterPro" id="IPR011583">
    <property type="entry name" value="Chitinase_II/V-like_cat"/>
</dbReference>
<dbReference type="InterPro" id="IPR029070">
    <property type="entry name" value="Chitinase_insertion_sf"/>
</dbReference>
<dbReference type="InterPro" id="IPR001223">
    <property type="entry name" value="Glyco_hydro18_cat"/>
</dbReference>
<dbReference type="InterPro" id="IPR017853">
    <property type="entry name" value="Glycoside_hydrolase_SF"/>
</dbReference>
<dbReference type="InterPro" id="IPR050314">
    <property type="entry name" value="Glycosyl_Hydrlase_18"/>
</dbReference>
<dbReference type="PANTHER" id="PTHR11177">
    <property type="entry name" value="CHITINASE"/>
    <property type="match status" value="1"/>
</dbReference>
<dbReference type="PANTHER" id="PTHR11177:SF202">
    <property type="entry name" value="CHITINASE-3-LIKE PROTEIN 1"/>
    <property type="match status" value="1"/>
</dbReference>
<dbReference type="Pfam" id="PF00704">
    <property type="entry name" value="Glyco_hydro_18"/>
    <property type="match status" value="1"/>
</dbReference>
<dbReference type="SMART" id="SM00636">
    <property type="entry name" value="Glyco_18"/>
    <property type="match status" value="1"/>
</dbReference>
<dbReference type="SUPFAM" id="SSF51445">
    <property type="entry name" value="(Trans)glycosidases"/>
    <property type="match status" value="1"/>
</dbReference>
<dbReference type="SUPFAM" id="SSF54556">
    <property type="entry name" value="Chitinase insertion domain"/>
    <property type="match status" value="1"/>
</dbReference>
<dbReference type="PROSITE" id="PS51910">
    <property type="entry name" value="GH18_2"/>
    <property type="match status" value="1"/>
</dbReference>
<organism>
    <name type="scientific">Ovis aries</name>
    <name type="common">Sheep</name>
    <dbReference type="NCBI Taxonomy" id="9940"/>
    <lineage>
        <taxon>Eukaryota</taxon>
        <taxon>Metazoa</taxon>
        <taxon>Chordata</taxon>
        <taxon>Craniata</taxon>
        <taxon>Vertebrata</taxon>
        <taxon>Euteleostomi</taxon>
        <taxon>Mammalia</taxon>
        <taxon>Eutheria</taxon>
        <taxon>Laurasiatheria</taxon>
        <taxon>Artiodactyla</taxon>
        <taxon>Ruminantia</taxon>
        <taxon>Pecora</taxon>
        <taxon>Bovidae</taxon>
        <taxon>Caprinae</taxon>
        <taxon>Ovis</taxon>
    </lineage>
</organism>
<reference key="1">
    <citation type="submission" date="2003-09" db="EMBL/GenBank/DDBJ databases">
        <title>Signal processing protein from sheep mammary gland.</title>
        <authorList>
            <person name="Das U."/>
            <person name="Saravanan K."/>
            <person name="Hariprasad R.G."/>
            <person name="Singh T.P."/>
            <person name="Srinivasan A."/>
        </authorList>
    </citation>
    <scope>NUCLEOTIDE SEQUENCE [MRNA]</scope>
    <source>
        <tissue>Mammary gland</tissue>
    </source>
</reference>
<reference key="2">
    <citation type="journal article" date="2006" name="J. Struct. Biol.">
        <title>Crystal structure of a secretory signalling glycoprotein from sheep at 2.0A resolution.</title>
        <authorList>
            <person name="Srivastava D.B."/>
            <person name="Ethayathulla A.S."/>
            <person name="Kumar J."/>
            <person name="Singh N."/>
            <person name="Sharma S."/>
            <person name="Das U."/>
            <person name="Srinivasan A."/>
            <person name="Singh T.P."/>
        </authorList>
    </citation>
    <scope>X-RAY CRYSTALLOGRAPHY (2.0 ANGSTROMS)</scope>
    <scope>PROTEIN SEQUENCE OF N-TERMINUS</scope>
    <scope>IDENTIFICATION BY MASS SPECTROMETRY</scope>
    <scope>GLYCOSYLATION AT ASN-39</scope>
    <scope>DISULFIDE BONDS</scope>
</reference>
<reference key="3">
    <citation type="journal article" date="2007" name="J. Struct. Biol.">
        <title>Carbohydrate binding properties and carbohydrate induced conformational switch in sheep secretory glycoprotein (SPS-40): crystal structures of four complexes of SPS-40 with chitin-like oligosaccharides.</title>
        <authorList>
            <person name="Srivastava D.B."/>
            <person name="Ethayathulla A.S."/>
            <person name="Kumar J."/>
            <person name="Somvanshi R.K."/>
            <person name="Sharma S."/>
            <person name="Dey S."/>
            <person name="Singh T.P."/>
        </authorList>
    </citation>
    <scope>X-RAY CRYSTALLOGRAPHY (2.2 ANGSTROMS) IN COMPLEXES WITH N-ACETYLGLUCOSAMINE OLIGOSACCHARIDES</scope>
    <scope>PROTEIN SEQUENCE OF N-TERMINUS</scope>
    <scope>IDENTIFICATION BY MASS SPECTROMETRY</scope>
    <scope>DISULFIDE BONDS</scope>
    <scope>GLYCOSYLATION AT ASN-39</scope>
    <scope>SUBCELLULAR LOCATION</scope>
</reference>
<keyword id="KW-0002">3D-structure</keyword>
<keyword id="KW-0929">Antimicrobial</keyword>
<keyword id="KW-0053">Apoptosis</keyword>
<keyword id="KW-0963">Cytoplasm</keyword>
<keyword id="KW-0903">Direct protein sequencing</keyword>
<keyword id="KW-1015">Disulfide bond</keyword>
<keyword id="KW-0256">Endoplasmic reticulum</keyword>
<keyword id="KW-0325">Glycoprotein</keyword>
<keyword id="KW-0395">Inflammatory response</keyword>
<keyword id="KW-0430">Lectin</keyword>
<keyword id="KW-1185">Reference proteome</keyword>
<keyword id="KW-0964">Secreted</keyword>
<sequence>YKLICYYTSWSQYREGDGSCFPDAIDPFLCTHVIYSFANISNNEIDTWEWNDVTLYDTLNTLKNRNPKLKTLLSVGGWNFGPERFSAIASKTQSRRTFIKSVPPFLRTHGFDGLDLAWLYPGRRDKRHLTTLVKEMKAEFIREAQAGTEQLLLSAAVSAGKIAIDRGYDIAQISRHLDFISLLTYDFHGAWRQTVGHHSPLFAGNEDASSRFSNADYAVSYMLRLGAPANKLVMGIPTFGRSFTLASSKTDVGAPVSGPGVPGRFTKEKGILAYYEICDFLHGATTHRFRDQQVPYATKGNQWVAYDDQESVKNKARYLKNRQLAGAMVWALDLDDFRGTFCGQNLTFPLTSAVKDVLAEV</sequence>
<protein>
    <recommendedName>
        <fullName>Chitinase-3-like protein 1</fullName>
    </recommendedName>
    <alternativeName>
        <fullName>Secretory glycoprotein of 40 kDa</fullName>
    </alternativeName>
    <alternativeName>
        <fullName>Signal-processing protein</fullName>
    </alternativeName>
</protein>